<comment type="subcellular location">
    <subcellularLocation>
        <location evidence="1">Spore coat</location>
    </subcellularLocation>
</comment>
<comment type="similarity">
    <text evidence="2">Belongs to the CotF family.</text>
</comment>
<evidence type="ECO:0000250" key="1"/>
<evidence type="ECO:0000305" key="2"/>
<reference key="1">
    <citation type="journal article" date="1997" name="Microbiology">
        <title>A 23911 bp region of the Bacillus subtilis genome comprising genes located upstream and downstream of the lev operon.</title>
        <authorList>
            <person name="Parro V."/>
            <person name="San Roman M."/>
            <person name="Galindo I."/>
            <person name="Purnelle B."/>
            <person name="Bolotin A."/>
            <person name="Sorokin A."/>
            <person name="Mellado R.P."/>
        </authorList>
    </citation>
    <scope>NUCLEOTIDE SEQUENCE [GENOMIC DNA]</scope>
    <source>
        <strain>168</strain>
    </source>
</reference>
<reference key="2">
    <citation type="journal article" date="1997" name="Nature">
        <title>The complete genome sequence of the Gram-positive bacterium Bacillus subtilis.</title>
        <authorList>
            <person name="Kunst F."/>
            <person name="Ogasawara N."/>
            <person name="Moszer I."/>
            <person name="Albertini A.M."/>
            <person name="Alloni G."/>
            <person name="Azevedo V."/>
            <person name="Bertero M.G."/>
            <person name="Bessieres P."/>
            <person name="Bolotin A."/>
            <person name="Borchert S."/>
            <person name="Borriss R."/>
            <person name="Boursier L."/>
            <person name="Brans A."/>
            <person name="Braun M."/>
            <person name="Brignell S.C."/>
            <person name="Bron S."/>
            <person name="Brouillet S."/>
            <person name="Bruschi C.V."/>
            <person name="Caldwell B."/>
            <person name="Capuano V."/>
            <person name="Carter N.M."/>
            <person name="Choi S.-K."/>
            <person name="Codani J.-J."/>
            <person name="Connerton I.F."/>
            <person name="Cummings N.J."/>
            <person name="Daniel R.A."/>
            <person name="Denizot F."/>
            <person name="Devine K.M."/>
            <person name="Duesterhoeft A."/>
            <person name="Ehrlich S.D."/>
            <person name="Emmerson P.T."/>
            <person name="Entian K.-D."/>
            <person name="Errington J."/>
            <person name="Fabret C."/>
            <person name="Ferrari E."/>
            <person name="Foulger D."/>
            <person name="Fritz C."/>
            <person name="Fujita M."/>
            <person name="Fujita Y."/>
            <person name="Fuma S."/>
            <person name="Galizzi A."/>
            <person name="Galleron N."/>
            <person name="Ghim S.-Y."/>
            <person name="Glaser P."/>
            <person name="Goffeau A."/>
            <person name="Golightly E.J."/>
            <person name="Grandi G."/>
            <person name="Guiseppi G."/>
            <person name="Guy B.J."/>
            <person name="Haga K."/>
            <person name="Haiech J."/>
            <person name="Harwood C.R."/>
            <person name="Henaut A."/>
            <person name="Hilbert H."/>
            <person name="Holsappel S."/>
            <person name="Hosono S."/>
            <person name="Hullo M.-F."/>
            <person name="Itaya M."/>
            <person name="Jones L.-M."/>
            <person name="Joris B."/>
            <person name="Karamata D."/>
            <person name="Kasahara Y."/>
            <person name="Klaerr-Blanchard M."/>
            <person name="Klein C."/>
            <person name="Kobayashi Y."/>
            <person name="Koetter P."/>
            <person name="Koningstein G."/>
            <person name="Krogh S."/>
            <person name="Kumano M."/>
            <person name="Kurita K."/>
            <person name="Lapidus A."/>
            <person name="Lardinois S."/>
            <person name="Lauber J."/>
            <person name="Lazarevic V."/>
            <person name="Lee S.-M."/>
            <person name="Levine A."/>
            <person name="Liu H."/>
            <person name="Masuda S."/>
            <person name="Mauel C."/>
            <person name="Medigue C."/>
            <person name="Medina N."/>
            <person name="Mellado R.P."/>
            <person name="Mizuno M."/>
            <person name="Moestl D."/>
            <person name="Nakai S."/>
            <person name="Noback M."/>
            <person name="Noone D."/>
            <person name="O'Reilly M."/>
            <person name="Ogawa K."/>
            <person name="Ogiwara A."/>
            <person name="Oudega B."/>
            <person name="Park S.-H."/>
            <person name="Parro V."/>
            <person name="Pohl T.M."/>
            <person name="Portetelle D."/>
            <person name="Porwollik S."/>
            <person name="Prescott A.M."/>
            <person name="Presecan E."/>
            <person name="Pujic P."/>
            <person name="Purnelle B."/>
            <person name="Rapoport G."/>
            <person name="Rey M."/>
            <person name="Reynolds S."/>
            <person name="Rieger M."/>
            <person name="Rivolta C."/>
            <person name="Rocha E."/>
            <person name="Roche B."/>
            <person name="Rose M."/>
            <person name="Sadaie Y."/>
            <person name="Sato T."/>
            <person name="Scanlan E."/>
            <person name="Schleich S."/>
            <person name="Schroeter R."/>
            <person name="Scoffone F."/>
            <person name="Sekiguchi J."/>
            <person name="Sekowska A."/>
            <person name="Seror S.J."/>
            <person name="Serror P."/>
            <person name="Shin B.-S."/>
            <person name="Soldo B."/>
            <person name="Sorokin A."/>
            <person name="Tacconi E."/>
            <person name="Takagi T."/>
            <person name="Takahashi H."/>
            <person name="Takemaru K."/>
            <person name="Takeuchi M."/>
            <person name="Tamakoshi A."/>
            <person name="Tanaka T."/>
            <person name="Terpstra P."/>
            <person name="Tognoni A."/>
            <person name="Tosato V."/>
            <person name="Uchiyama S."/>
            <person name="Vandenbol M."/>
            <person name="Vannier F."/>
            <person name="Vassarotti A."/>
            <person name="Viari A."/>
            <person name="Wambutt R."/>
            <person name="Wedler E."/>
            <person name="Wedler H."/>
            <person name="Weitzenegger T."/>
            <person name="Winters P."/>
            <person name="Wipat A."/>
            <person name="Yamamoto H."/>
            <person name="Yamane K."/>
            <person name="Yasumoto K."/>
            <person name="Yata K."/>
            <person name="Yoshida K."/>
            <person name="Yoshikawa H.-F."/>
            <person name="Zumstein E."/>
            <person name="Yoshikawa H."/>
            <person name="Danchin A."/>
        </authorList>
    </citation>
    <scope>NUCLEOTIDE SEQUENCE [LARGE SCALE GENOMIC DNA]</scope>
    <source>
        <strain>168</strain>
    </source>
</reference>
<keyword id="KW-1185">Reference proteome</keyword>
<keyword id="KW-0749">Sporulation</keyword>
<proteinExistence type="inferred from homology"/>
<feature type="chain" id="PRO_0000360484" description="Spore coat protein F-like protein YraD">
    <location>
        <begin position="1"/>
        <end position="99"/>
    </location>
</feature>
<name>YRAD_BACSU</name>
<protein>
    <recommendedName>
        <fullName>Spore coat protein F-like protein YraD</fullName>
    </recommendedName>
</protein>
<accession>O06010</accession>
<accession>Q795Z2</accession>
<sequence>MNPIIEYLTGMNVLTDQIIAMDLLISAKNGVRNYAMAATEAGTPEVKEVLIRHLEEALDMHEQLSSYMMEKGWYHPWNPDEQVKLNLKNIDTAIQLPTL</sequence>
<organism>
    <name type="scientific">Bacillus subtilis (strain 168)</name>
    <dbReference type="NCBI Taxonomy" id="224308"/>
    <lineage>
        <taxon>Bacteria</taxon>
        <taxon>Bacillati</taxon>
        <taxon>Bacillota</taxon>
        <taxon>Bacilli</taxon>
        <taxon>Bacillales</taxon>
        <taxon>Bacillaceae</taxon>
        <taxon>Bacillus</taxon>
    </lineage>
</organism>
<dbReference type="EMBL" id="X92868">
    <property type="protein sequence ID" value="CAA63470.1"/>
    <property type="molecule type" value="Genomic_DNA"/>
</dbReference>
<dbReference type="EMBL" id="AL009126">
    <property type="protein sequence ID" value="CAB14640.1"/>
    <property type="molecule type" value="Genomic_DNA"/>
</dbReference>
<dbReference type="PIR" id="D69970">
    <property type="entry name" value="D69970"/>
</dbReference>
<dbReference type="RefSeq" id="NP_390576.1">
    <property type="nucleotide sequence ID" value="NC_000964.3"/>
</dbReference>
<dbReference type="RefSeq" id="WP_003246006.1">
    <property type="nucleotide sequence ID" value="NZ_OZ025638.1"/>
</dbReference>
<dbReference type="SMR" id="O06010"/>
<dbReference type="FunCoup" id="O06010">
    <property type="interactions" value="11"/>
</dbReference>
<dbReference type="STRING" id="224308.BSU26990"/>
<dbReference type="PaxDb" id="224308-BSU26990"/>
<dbReference type="EnsemblBacteria" id="CAB14640">
    <property type="protein sequence ID" value="CAB14640"/>
    <property type="gene ID" value="BSU_26990"/>
</dbReference>
<dbReference type="GeneID" id="935919"/>
<dbReference type="KEGG" id="bsu:BSU26990"/>
<dbReference type="PATRIC" id="fig|224308.179.peg.2931"/>
<dbReference type="eggNOG" id="COG5577">
    <property type="taxonomic scope" value="Bacteria"/>
</dbReference>
<dbReference type="InParanoid" id="O06010"/>
<dbReference type="OrthoDB" id="1930261at2"/>
<dbReference type="PhylomeDB" id="O06010"/>
<dbReference type="BioCyc" id="BSUB:BSU26990-MONOMER"/>
<dbReference type="Proteomes" id="UP000001570">
    <property type="component" value="Chromosome"/>
</dbReference>
<dbReference type="GO" id="GO:0030435">
    <property type="term" value="P:sporulation resulting in formation of a cellular spore"/>
    <property type="evidence" value="ECO:0007669"/>
    <property type="project" value="UniProtKB-KW"/>
</dbReference>
<dbReference type="Gene3D" id="1.20.1260.10">
    <property type="match status" value="1"/>
</dbReference>
<dbReference type="InterPro" id="IPR012347">
    <property type="entry name" value="Ferritin-like"/>
</dbReference>
<dbReference type="InterPro" id="IPR012851">
    <property type="entry name" value="Spore_coat_CotF-like"/>
</dbReference>
<dbReference type="PANTHER" id="PTHR39183">
    <property type="entry name" value="SPORE COAT PROTEIN F-LIKE PROTEIN YHCQ"/>
    <property type="match status" value="1"/>
</dbReference>
<dbReference type="PANTHER" id="PTHR39183:SF1">
    <property type="entry name" value="SPORE COAT PROTEIN F-LIKE PROTEIN YHCQ"/>
    <property type="match status" value="1"/>
</dbReference>
<dbReference type="Pfam" id="PF07875">
    <property type="entry name" value="Coat_F"/>
    <property type="match status" value="1"/>
</dbReference>
<gene>
    <name type="primary">yraD</name>
    <name type="ordered locus">BSU26990</name>
</gene>